<sequence>MSSNEAYHEPGAGGDGPGGSSGASGGGSQRSNQLHHQQILNETTYLKPAAKQAYFSDEKVLIPDDDSTNVGFSFRKLWAFTGPGFLMSIAYLDPGNIESDMQSGAAAKYKILWVLLWATVLGLLMQRLAARLGVVTGLHLAEMCYRQYKRLPRWILWIMIEIAIIGSDMQEVIGTAIAIYLLSNKVVPLWGGVLITIVDTFTFLFLDKYGLRKLEFLFGTLITIMAVSFGYEYIVSAPNQGEVLEGMFVPWCSNCNSNVLLQAVGVVGAVIMPHNLYLHSALVKSRDIDRRQTKKVSEANFYFFIEASVALFVSFIINLFVVAVFAHGMYGKTNNDVVEVCKDKSMYEDAKMSFVDNVNGTAIIDADLYKGGLFLGCTFGAVAMYIWGVGILAAGQSSTMTGTYAGQFSMEGFLNLQWPRWCRVLVTRCIAIIPTFCLAMFSKMEDLTSMNDILNAVMSLQLPFAAIPTIAFTSCAAIMGEFVNGLGNKIVSILLTIVVIGVNLYFVVVQVENMEIKGGLLALVCIFAILYILFNLYLVIHMAACMGNQRLMNSRWVQRFVLPSQNSFSIKNANSTYARIATSSDQEPEGLAGEDA</sequence>
<dbReference type="EMBL" id="U23948">
    <property type="protein sequence ID" value="AAA82593.1"/>
    <property type="molecule type" value="mRNA"/>
</dbReference>
<dbReference type="EMBL" id="AE014297">
    <property type="protein sequence ID" value="AAF55839.2"/>
    <property type="molecule type" value="Genomic_DNA"/>
</dbReference>
<dbReference type="EMBL" id="AE014297">
    <property type="protein sequence ID" value="AAS65187.1"/>
    <property type="molecule type" value="Genomic_DNA"/>
</dbReference>
<dbReference type="EMBL" id="AY058543">
    <property type="protein sequence ID" value="AAL13772.1"/>
    <property type="molecule type" value="mRNA"/>
</dbReference>
<dbReference type="PIR" id="S56140">
    <property type="entry name" value="S56140"/>
</dbReference>
<dbReference type="RefSeq" id="NP_001163668.1">
    <molecule id="P49283-2"/>
    <property type="nucleotide sequence ID" value="NM_001170197.1"/>
</dbReference>
<dbReference type="RefSeq" id="NP_524425.2">
    <molecule id="P49283-2"/>
    <property type="nucleotide sequence ID" value="NM_079701.5"/>
</dbReference>
<dbReference type="RefSeq" id="NP_732584.1">
    <molecule id="P49283-2"/>
    <property type="nucleotide sequence ID" value="NM_169944.3"/>
</dbReference>
<dbReference type="RefSeq" id="NP_996251.2">
    <property type="nucleotide sequence ID" value="NM_206529.2"/>
</dbReference>
<dbReference type="SMR" id="P49283"/>
<dbReference type="BioGRID" id="67461">
    <property type="interactions" value="2"/>
</dbReference>
<dbReference type="FunCoup" id="P49283">
    <property type="interactions" value="962"/>
</dbReference>
<dbReference type="IntAct" id="P49283">
    <property type="interactions" value="1"/>
</dbReference>
<dbReference type="STRING" id="7227.FBpp0303079"/>
<dbReference type="TCDB" id="2.A.55.2.11">
    <property type="family name" value="the metal ion (mn(2+)-iron) transporter (nramp) family"/>
</dbReference>
<dbReference type="GlyCosmos" id="P49283">
    <property type="glycosylation" value="3 sites, No reported glycans"/>
</dbReference>
<dbReference type="GlyGen" id="P49283">
    <property type="glycosylation" value="3 sites"/>
</dbReference>
<dbReference type="PaxDb" id="7227-FBpp0297444"/>
<dbReference type="DNASU" id="42490"/>
<dbReference type="EnsemblMetazoa" id="FBtr0089521">
    <molecule id="P49283-2"/>
    <property type="protein sequence ID" value="FBpp0088507"/>
    <property type="gene ID" value="FBgn0011672"/>
</dbReference>
<dbReference type="EnsemblMetazoa" id="FBtr0301477">
    <molecule id="P49283-2"/>
    <property type="protein sequence ID" value="FBpp0290692"/>
    <property type="gene ID" value="FBgn0011672"/>
</dbReference>
<dbReference type="EnsemblMetazoa" id="FBtr0301478">
    <molecule id="P49283-2"/>
    <property type="protein sequence ID" value="FBpp0290693"/>
    <property type="gene ID" value="FBgn0011672"/>
</dbReference>
<dbReference type="GeneID" id="42490"/>
<dbReference type="KEGG" id="dme:Dmel_CG3671"/>
<dbReference type="UCSC" id="CG3671-RA">
    <molecule id="P49283-2"/>
    <property type="organism name" value="d. melanogaster"/>
</dbReference>
<dbReference type="AGR" id="FB:FBgn0011672"/>
<dbReference type="CTD" id="42490"/>
<dbReference type="FlyBase" id="FBgn0011672">
    <property type="gene designation" value="Mvl"/>
</dbReference>
<dbReference type="VEuPathDB" id="VectorBase:FBgn0011672"/>
<dbReference type="eggNOG" id="KOG1291">
    <property type="taxonomic scope" value="Eukaryota"/>
</dbReference>
<dbReference type="GeneTree" id="ENSGT00940000170016"/>
<dbReference type="HOGENOM" id="CLU_020088_5_2_1"/>
<dbReference type="InParanoid" id="P49283"/>
<dbReference type="OMA" id="PWMQFYQ"/>
<dbReference type="OrthoDB" id="409173at2759"/>
<dbReference type="PhylomeDB" id="P49283"/>
<dbReference type="Reactome" id="R-DME-1222556">
    <property type="pathway name" value="ROS and RNS production in phagocytes"/>
</dbReference>
<dbReference type="Reactome" id="R-DME-425410">
    <property type="pathway name" value="Metal ion SLC transporters"/>
</dbReference>
<dbReference type="Reactome" id="R-DME-6798695">
    <property type="pathway name" value="Neutrophil degranulation"/>
</dbReference>
<dbReference type="Reactome" id="R-DME-6803544">
    <property type="pathway name" value="Ion influx/efflux at host-pathogen interface"/>
</dbReference>
<dbReference type="Reactome" id="R-DME-917937">
    <property type="pathway name" value="Iron uptake and transport"/>
</dbReference>
<dbReference type="BioGRID-ORCS" id="42490">
    <property type="hits" value="2 hits in 3 CRISPR screens"/>
</dbReference>
<dbReference type="GenomeRNAi" id="42490"/>
<dbReference type="PRO" id="PR:P49283"/>
<dbReference type="Proteomes" id="UP000000803">
    <property type="component" value="Chromosome 3R"/>
</dbReference>
<dbReference type="Bgee" id="FBgn0011672">
    <property type="expression patterns" value="Expressed in adult abdominal pericardial cell (Drosophila) in dorsal vessel heart and 186 other cell types or tissues"/>
</dbReference>
<dbReference type="ExpressionAtlas" id="P49283">
    <property type="expression patterns" value="baseline and differential"/>
</dbReference>
<dbReference type="GO" id="GO:0005768">
    <property type="term" value="C:endosome"/>
    <property type="evidence" value="ECO:0000314"/>
    <property type="project" value="FlyBase"/>
</dbReference>
<dbReference type="GO" id="GO:0010008">
    <property type="term" value="C:endosome membrane"/>
    <property type="evidence" value="ECO:0000318"/>
    <property type="project" value="GO_Central"/>
</dbReference>
<dbReference type="GO" id="GO:0016020">
    <property type="term" value="C:membrane"/>
    <property type="evidence" value="ECO:0000314"/>
    <property type="project" value="FlyBase"/>
</dbReference>
<dbReference type="GO" id="GO:0005886">
    <property type="term" value="C:plasma membrane"/>
    <property type="evidence" value="ECO:0000314"/>
    <property type="project" value="FlyBase"/>
</dbReference>
<dbReference type="GO" id="GO:0015086">
    <property type="term" value="F:cadmium ion transmembrane transporter activity"/>
    <property type="evidence" value="ECO:0000318"/>
    <property type="project" value="GO_Central"/>
</dbReference>
<dbReference type="GO" id="GO:0005375">
    <property type="term" value="F:copper ion transmembrane transporter activity"/>
    <property type="evidence" value="ECO:0000315"/>
    <property type="project" value="FlyBase"/>
</dbReference>
<dbReference type="GO" id="GO:0005381">
    <property type="term" value="F:iron ion transmembrane transporter activity"/>
    <property type="evidence" value="ECO:0000315"/>
    <property type="project" value="FlyBase"/>
</dbReference>
<dbReference type="GO" id="GO:0005384">
    <property type="term" value="F:manganese ion transmembrane transporter activity"/>
    <property type="evidence" value="ECO:0000315"/>
    <property type="project" value="FlyBase"/>
</dbReference>
<dbReference type="GO" id="GO:0015293">
    <property type="term" value="F:symporter activity"/>
    <property type="evidence" value="ECO:0000316"/>
    <property type="project" value="FlyBase"/>
</dbReference>
<dbReference type="GO" id="GO:0055070">
    <property type="term" value="P:copper ion homeostasis"/>
    <property type="evidence" value="ECO:0000315"/>
    <property type="project" value="FlyBase"/>
</dbReference>
<dbReference type="GO" id="GO:0015677">
    <property type="term" value="P:copper ion import"/>
    <property type="evidence" value="ECO:0000315"/>
    <property type="project" value="FlyBase"/>
</dbReference>
<dbReference type="GO" id="GO:0034755">
    <property type="term" value="P:iron ion transmembrane transport"/>
    <property type="evidence" value="ECO:0000315"/>
    <property type="project" value="FlyBase"/>
</dbReference>
<dbReference type="GO" id="GO:0006828">
    <property type="term" value="P:manganese ion transport"/>
    <property type="evidence" value="ECO:0000318"/>
    <property type="project" value="GO_Central"/>
</dbReference>
<dbReference type="GO" id="GO:0030001">
    <property type="term" value="P:metal ion transport"/>
    <property type="evidence" value="ECO:0000316"/>
    <property type="project" value="FlyBase"/>
</dbReference>
<dbReference type="GO" id="GO:0034761">
    <property type="term" value="P:positive regulation of iron ion transmembrane transport"/>
    <property type="evidence" value="ECO:0000315"/>
    <property type="project" value="FlyBase"/>
</dbReference>
<dbReference type="GO" id="GO:0050916">
    <property type="term" value="P:sensory perception of sweet taste"/>
    <property type="evidence" value="ECO:0000315"/>
    <property type="project" value="FlyBase"/>
</dbReference>
<dbReference type="GO" id="GO:0046718">
    <property type="term" value="P:symbiont entry into host cell"/>
    <property type="evidence" value="ECO:0000315"/>
    <property type="project" value="FlyBase"/>
</dbReference>
<dbReference type="GO" id="GO:0000041">
    <property type="term" value="P:transition metal ion transport"/>
    <property type="evidence" value="ECO:0000315"/>
    <property type="project" value="FlyBase"/>
</dbReference>
<dbReference type="HAMAP" id="MF_00221">
    <property type="entry name" value="NRAMP"/>
    <property type="match status" value="1"/>
</dbReference>
<dbReference type="InterPro" id="IPR001046">
    <property type="entry name" value="NRAMP_fam"/>
</dbReference>
<dbReference type="NCBIfam" id="TIGR01197">
    <property type="entry name" value="nramp"/>
    <property type="match status" value="1"/>
</dbReference>
<dbReference type="NCBIfam" id="NF037982">
    <property type="entry name" value="Nramp_1"/>
    <property type="match status" value="1"/>
</dbReference>
<dbReference type="PANTHER" id="PTHR11706:SF33">
    <property type="entry name" value="NATURAL RESISTANCE-ASSOCIATED MACROPHAGE PROTEIN 2"/>
    <property type="match status" value="1"/>
</dbReference>
<dbReference type="PANTHER" id="PTHR11706">
    <property type="entry name" value="SOLUTE CARRIER PROTEIN FAMILY 11 MEMBER"/>
    <property type="match status" value="1"/>
</dbReference>
<dbReference type="Pfam" id="PF01566">
    <property type="entry name" value="Nramp"/>
    <property type="match status" value="1"/>
</dbReference>
<dbReference type="PRINTS" id="PR00447">
    <property type="entry name" value="NATRESASSCMP"/>
</dbReference>
<protein>
    <recommendedName>
        <fullName>Protein Malvolio</fullName>
    </recommendedName>
</protein>
<feature type="chain" id="PRO_0000212597" description="Protein Malvolio">
    <location>
        <begin position="1"/>
        <end position="596"/>
    </location>
</feature>
<feature type="transmembrane region" description="Helical" evidence="1">
    <location>
        <begin position="77"/>
        <end position="97"/>
    </location>
</feature>
<feature type="transmembrane region" description="Helical" evidence="1">
    <location>
        <begin position="105"/>
        <end position="125"/>
    </location>
</feature>
<feature type="transmembrane region" description="Helical" evidence="1">
    <location>
        <begin position="154"/>
        <end position="174"/>
    </location>
</feature>
<feature type="transmembrane region" description="Helical" evidence="1">
    <location>
        <begin position="186"/>
        <end position="206"/>
    </location>
</feature>
<feature type="transmembrane region" description="Helical" evidence="1">
    <location>
        <begin position="216"/>
        <end position="236"/>
    </location>
</feature>
<feature type="transmembrane region" description="Helical" evidence="1">
    <location>
        <begin position="263"/>
        <end position="283"/>
    </location>
</feature>
<feature type="transmembrane region" description="Helical" evidence="1">
    <location>
        <begin position="309"/>
        <end position="329"/>
    </location>
</feature>
<feature type="transmembrane region" description="Helical" evidence="1">
    <location>
        <begin position="373"/>
        <end position="393"/>
    </location>
</feature>
<feature type="transmembrane region" description="Helical" evidence="1">
    <location>
        <begin position="424"/>
        <end position="444"/>
    </location>
</feature>
<feature type="transmembrane region" description="Helical" evidence="1">
    <location>
        <begin position="463"/>
        <end position="483"/>
    </location>
</feature>
<feature type="transmembrane region" description="Helical" evidence="1">
    <location>
        <begin position="490"/>
        <end position="510"/>
    </location>
</feature>
<feature type="transmembrane region" description="Helical" evidence="1">
    <location>
        <begin position="520"/>
        <end position="540"/>
    </location>
</feature>
<feature type="region of interest" description="Disordered" evidence="2">
    <location>
        <begin position="1"/>
        <end position="34"/>
    </location>
</feature>
<feature type="compositionally biased region" description="Gly residues" evidence="2">
    <location>
        <begin position="11"/>
        <end position="28"/>
    </location>
</feature>
<feature type="glycosylation site" description="N-linked (GlcNAc...) asparagine" evidence="1">
    <location>
        <position position="41"/>
    </location>
</feature>
<feature type="glycosylation site" description="N-linked (GlcNAc...) asparagine" evidence="1">
    <location>
        <position position="359"/>
    </location>
</feature>
<feature type="glycosylation site" description="N-linked (GlcNAc...) asparagine" evidence="1">
    <location>
        <position position="574"/>
    </location>
</feature>
<feature type="splice variant" id="VSP_008202" description="In isoform C." evidence="3">
    <location>
        <begin position="487"/>
        <end position="596"/>
    </location>
</feature>
<accession>P49283</accession>
<accession>Q95TT7</accession>
<accession>Q9VDF5</accession>
<keyword id="KW-0025">Alternative splicing</keyword>
<keyword id="KW-0325">Glycoprotein</keyword>
<keyword id="KW-0472">Membrane</keyword>
<keyword id="KW-1185">Reference proteome</keyword>
<keyword id="KW-0812">Transmembrane</keyword>
<keyword id="KW-1133">Transmembrane helix</keyword>
<keyword id="KW-0813">Transport</keyword>
<organism>
    <name type="scientific">Drosophila melanogaster</name>
    <name type="common">Fruit fly</name>
    <dbReference type="NCBI Taxonomy" id="7227"/>
    <lineage>
        <taxon>Eukaryota</taxon>
        <taxon>Metazoa</taxon>
        <taxon>Ecdysozoa</taxon>
        <taxon>Arthropoda</taxon>
        <taxon>Hexapoda</taxon>
        <taxon>Insecta</taxon>
        <taxon>Pterygota</taxon>
        <taxon>Neoptera</taxon>
        <taxon>Endopterygota</taxon>
        <taxon>Diptera</taxon>
        <taxon>Brachycera</taxon>
        <taxon>Muscomorpha</taxon>
        <taxon>Ephydroidea</taxon>
        <taxon>Drosophilidae</taxon>
        <taxon>Drosophila</taxon>
        <taxon>Sophophora</taxon>
    </lineage>
</organism>
<comment type="function">
    <text>Putative transporter required for normal taste behavior. May be a nitrite/nitrate transporter.</text>
</comment>
<comment type="subcellular location">
    <subcellularLocation>
        <location evidence="4">Membrane</location>
        <topology evidence="4">Multi-pass membrane protein</topology>
    </subcellularLocation>
</comment>
<comment type="alternative products">
    <event type="alternative splicing"/>
    <isoform>
        <id>P49283-2</id>
        <name>A</name>
        <name>B</name>
        <sequence type="displayed"/>
    </isoform>
    <isoform>
        <id>P49283-1</id>
        <name>C</name>
        <sequence type="described" ref="VSP_008202"/>
    </isoform>
</comment>
<comment type="tissue specificity">
    <text>Expressed in macrophages and in the nervous system.</text>
</comment>
<comment type="miscellaneous">
    <text>'Malvolio' is a character in Shakespeare's twelfth night, who 'taste(d) with distempered appetite'.</text>
</comment>
<comment type="similarity">
    <text evidence="4">Belongs to the NRAMP family.</text>
</comment>
<reference key="1">
    <citation type="journal article" date="1995" name="EMBO J.">
        <title>Malvolio, the Drosophila homologue of mouse NRAMP-1 (Bcg), is expressed in macrophages and in the nervous system and is required for normal taste behaviour.</title>
        <authorList>
            <person name="Rodrigues V."/>
            <person name="Cheah P.Y."/>
            <person name="Ray K."/>
            <person name="Chia W."/>
        </authorList>
    </citation>
    <scope>NUCLEOTIDE SEQUENCE [MRNA] (ISOFORM C)</scope>
</reference>
<reference key="2">
    <citation type="journal article" date="2000" name="Science">
        <title>The genome sequence of Drosophila melanogaster.</title>
        <authorList>
            <person name="Adams M.D."/>
            <person name="Celniker S.E."/>
            <person name="Holt R.A."/>
            <person name="Evans C.A."/>
            <person name="Gocayne J.D."/>
            <person name="Amanatides P.G."/>
            <person name="Scherer S.E."/>
            <person name="Li P.W."/>
            <person name="Hoskins R.A."/>
            <person name="Galle R.F."/>
            <person name="George R.A."/>
            <person name="Lewis S.E."/>
            <person name="Richards S."/>
            <person name="Ashburner M."/>
            <person name="Henderson S.N."/>
            <person name="Sutton G.G."/>
            <person name="Wortman J.R."/>
            <person name="Yandell M.D."/>
            <person name="Zhang Q."/>
            <person name="Chen L.X."/>
            <person name="Brandon R.C."/>
            <person name="Rogers Y.-H.C."/>
            <person name="Blazej R.G."/>
            <person name="Champe M."/>
            <person name="Pfeiffer B.D."/>
            <person name="Wan K.H."/>
            <person name="Doyle C."/>
            <person name="Baxter E.G."/>
            <person name="Helt G."/>
            <person name="Nelson C.R."/>
            <person name="Miklos G.L.G."/>
            <person name="Abril J.F."/>
            <person name="Agbayani A."/>
            <person name="An H.-J."/>
            <person name="Andrews-Pfannkoch C."/>
            <person name="Baldwin D."/>
            <person name="Ballew R.M."/>
            <person name="Basu A."/>
            <person name="Baxendale J."/>
            <person name="Bayraktaroglu L."/>
            <person name="Beasley E.M."/>
            <person name="Beeson K.Y."/>
            <person name="Benos P.V."/>
            <person name="Berman B.P."/>
            <person name="Bhandari D."/>
            <person name="Bolshakov S."/>
            <person name="Borkova D."/>
            <person name="Botchan M.R."/>
            <person name="Bouck J."/>
            <person name="Brokstein P."/>
            <person name="Brottier P."/>
            <person name="Burtis K.C."/>
            <person name="Busam D.A."/>
            <person name="Butler H."/>
            <person name="Cadieu E."/>
            <person name="Center A."/>
            <person name="Chandra I."/>
            <person name="Cherry J.M."/>
            <person name="Cawley S."/>
            <person name="Dahlke C."/>
            <person name="Davenport L.B."/>
            <person name="Davies P."/>
            <person name="de Pablos B."/>
            <person name="Delcher A."/>
            <person name="Deng Z."/>
            <person name="Mays A.D."/>
            <person name="Dew I."/>
            <person name="Dietz S.M."/>
            <person name="Dodson K."/>
            <person name="Doup L.E."/>
            <person name="Downes M."/>
            <person name="Dugan-Rocha S."/>
            <person name="Dunkov B.C."/>
            <person name="Dunn P."/>
            <person name="Durbin K.J."/>
            <person name="Evangelista C.C."/>
            <person name="Ferraz C."/>
            <person name="Ferriera S."/>
            <person name="Fleischmann W."/>
            <person name="Fosler C."/>
            <person name="Gabrielian A.E."/>
            <person name="Garg N.S."/>
            <person name="Gelbart W.M."/>
            <person name="Glasser K."/>
            <person name="Glodek A."/>
            <person name="Gong F."/>
            <person name="Gorrell J.H."/>
            <person name="Gu Z."/>
            <person name="Guan P."/>
            <person name="Harris M."/>
            <person name="Harris N.L."/>
            <person name="Harvey D.A."/>
            <person name="Heiman T.J."/>
            <person name="Hernandez J.R."/>
            <person name="Houck J."/>
            <person name="Hostin D."/>
            <person name="Houston K.A."/>
            <person name="Howland T.J."/>
            <person name="Wei M.-H."/>
            <person name="Ibegwam C."/>
            <person name="Jalali M."/>
            <person name="Kalush F."/>
            <person name="Karpen G.H."/>
            <person name="Ke Z."/>
            <person name="Kennison J.A."/>
            <person name="Ketchum K.A."/>
            <person name="Kimmel B.E."/>
            <person name="Kodira C.D."/>
            <person name="Kraft C.L."/>
            <person name="Kravitz S."/>
            <person name="Kulp D."/>
            <person name="Lai Z."/>
            <person name="Lasko P."/>
            <person name="Lei Y."/>
            <person name="Levitsky A.A."/>
            <person name="Li J.H."/>
            <person name="Li Z."/>
            <person name="Liang Y."/>
            <person name="Lin X."/>
            <person name="Liu X."/>
            <person name="Mattei B."/>
            <person name="McIntosh T.C."/>
            <person name="McLeod M.P."/>
            <person name="McPherson D."/>
            <person name="Merkulov G."/>
            <person name="Milshina N.V."/>
            <person name="Mobarry C."/>
            <person name="Morris J."/>
            <person name="Moshrefi A."/>
            <person name="Mount S.M."/>
            <person name="Moy M."/>
            <person name="Murphy B."/>
            <person name="Murphy L."/>
            <person name="Muzny D.M."/>
            <person name="Nelson D.L."/>
            <person name="Nelson D.R."/>
            <person name="Nelson K.A."/>
            <person name="Nixon K."/>
            <person name="Nusskern D.R."/>
            <person name="Pacleb J.M."/>
            <person name="Palazzolo M."/>
            <person name="Pittman G.S."/>
            <person name="Pan S."/>
            <person name="Pollard J."/>
            <person name="Puri V."/>
            <person name="Reese M.G."/>
            <person name="Reinert K."/>
            <person name="Remington K."/>
            <person name="Saunders R.D.C."/>
            <person name="Scheeler F."/>
            <person name="Shen H."/>
            <person name="Shue B.C."/>
            <person name="Siden-Kiamos I."/>
            <person name="Simpson M."/>
            <person name="Skupski M.P."/>
            <person name="Smith T.J."/>
            <person name="Spier E."/>
            <person name="Spradling A.C."/>
            <person name="Stapleton M."/>
            <person name="Strong R."/>
            <person name="Sun E."/>
            <person name="Svirskas R."/>
            <person name="Tector C."/>
            <person name="Turner R."/>
            <person name="Venter E."/>
            <person name="Wang A.H."/>
            <person name="Wang X."/>
            <person name="Wang Z.-Y."/>
            <person name="Wassarman D.A."/>
            <person name="Weinstock G.M."/>
            <person name="Weissenbach J."/>
            <person name="Williams S.M."/>
            <person name="Woodage T."/>
            <person name="Worley K.C."/>
            <person name="Wu D."/>
            <person name="Yang S."/>
            <person name="Yao Q.A."/>
            <person name="Ye J."/>
            <person name="Yeh R.-F."/>
            <person name="Zaveri J.S."/>
            <person name="Zhan M."/>
            <person name="Zhang G."/>
            <person name="Zhao Q."/>
            <person name="Zheng L."/>
            <person name="Zheng X.H."/>
            <person name="Zhong F.N."/>
            <person name="Zhong W."/>
            <person name="Zhou X."/>
            <person name="Zhu S.C."/>
            <person name="Zhu X."/>
            <person name="Smith H.O."/>
            <person name="Gibbs R.A."/>
            <person name="Myers E.W."/>
            <person name="Rubin G.M."/>
            <person name="Venter J.C."/>
        </authorList>
    </citation>
    <scope>NUCLEOTIDE SEQUENCE [LARGE SCALE GENOMIC DNA]</scope>
    <source>
        <strain>Berkeley</strain>
    </source>
</reference>
<reference key="3">
    <citation type="journal article" date="2002" name="Genome Biol.">
        <title>Annotation of the Drosophila melanogaster euchromatic genome: a systematic review.</title>
        <authorList>
            <person name="Misra S."/>
            <person name="Crosby M.A."/>
            <person name="Mungall C.J."/>
            <person name="Matthews B.B."/>
            <person name="Campbell K.S."/>
            <person name="Hradecky P."/>
            <person name="Huang Y."/>
            <person name="Kaminker J.S."/>
            <person name="Millburn G.H."/>
            <person name="Prochnik S.E."/>
            <person name="Smith C.D."/>
            <person name="Tupy J.L."/>
            <person name="Whitfield E.J."/>
            <person name="Bayraktaroglu L."/>
            <person name="Berman B.P."/>
            <person name="Bettencourt B.R."/>
            <person name="Celniker S.E."/>
            <person name="de Grey A.D.N.J."/>
            <person name="Drysdale R.A."/>
            <person name="Harris N.L."/>
            <person name="Richter J."/>
            <person name="Russo S."/>
            <person name="Schroeder A.J."/>
            <person name="Shu S.Q."/>
            <person name="Stapleton M."/>
            <person name="Yamada C."/>
            <person name="Ashburner M."/>
            <person name="Gelbart W.M."/>
            <person name="Rubin G.M."/>
            <person name="Lewis S.E."/>
        </authorList>
    </citation>
    <scope>GENOME REANNOTATION</scope>
    <scope>ALTERNATIVE SPLICING</scope>
    <source>
        <strain>Berkeley</strain>
    </source>
</reference>
<reference key="4">
    <citation type="journal article" date="2002" name="Genome Biol.">
        <title>A Drosophila full-length cDNA resource.</title>
        <authorList>
            <person name="Stapleton M."/>
            <person name="Carlson J.W."/>
            <person name="Brokstein P."/>
            <person name="Yu C."/>
            <person name="Champe M."/>
            <person name="George R.A."/>
            <person name="Guarin H."/>
            <person name="Kronmiller B."/>
            <person name="Pacleb J.M."/>
            <person name="Park S."/>
            <person name="Wan K.H."/>
            <person name="Rubin G.M."/>
            <person name="Celniker S.E."/>
        </authorList>
    </citation>
    <scope>NUCLEOTIDE SEQUENCE [LARGE SCALE MRNA] (ISOFORM A)</scope>
    <source>
        <strain>Berkeley</strain>
        <tissue>Embryo</tissue>
    </source>
</reference>
<gene>
    <name type="primary">Mvl</name>
    <name type="ORF">CG3671</name>
</gene>
<evidence type="ECO:0000255" key="1"/>
<evidence type="ECO:0000256" key="2">
    <source>
        <dbReference type="SAM" id="MobiDB-lite"/>
    </source>
</evidence>
<evidence type="ECO:0000303" key="3">
    <source>
    </source>
</evidence>
<evidence type="ECO:0000305" key="4"/>
<name>MVL_DROME</name>
<proteinExistence type="evidence at transcript level"/>